<feature type="chain" id="PRO_0000218963" description="Ribosome biogenesis protein NOP53">
    <location>
        <begin position="1"/>
        <end position="442"/>
    </location>
</feature>
<feature type="region of interest" description="Disordered" evidence="2">
    <location>
        <begin position="242"/>
        <end position="264"/>
    </location>
</feature>
<dbReference type="EMBL" id="AC002336">
    <property type="protein sequence ID" value="AAB87593.2"/>
    <property type="molecule type" value="Genomic_DNA"/>
</dbReference>
<dbReference type="EMBL" id="AC007020">
    <property type="protein sequence ID" value="AAM15353.1"/>
    <property type="molecule type" value="Genomic_DNA"/>
</dbReference>
<dbReference type="EMBL" id="CP002685">
    <property type="protein sequence ID" value="AEC09827.1"/>
    <property type="molecule type" value="Genomic_DNA"/>
</dbReference>
<dbReference type="EMBL" id="AY093264">
    <property type="protein sequence ID" value="AAM13263.1"/>
    <property type="molecule type" value="mRNA"/>
</dbReference>
<dbReference type="EMBL" id="AY054491">
    <property type="protein sequence ID" value="AAK96682.1"/>
    <property type="molecule type" value="mRNA"/>
</dbReference>
<dbReference type="PIR" id="D84829">
    <property type="entry name" value="D84829"/>
</dbReference>
<dbReference type="RefSeq" id="NP_565931.1">
    <molecule id="O22892-1"/>
    <property type="nucleotide sequence ID" value="NM_129603.4"/>
</dbReference>
<dbReference type="SMR" id="O22892"/>
<dbReference type="BioGRID" id="3974">
    <property type="interactions" value="1"/>
</dbReference>
<dbReference type="FunCoup" id="O22892">
    <property type="interactions" value="3293"/>
</dbReference>
<dbReference type="STRING" id="3702.O22892"/>
<dbReference type="iPTMnet" id="O22892"/>
<dbReference type="PaxDb" id="3702-AT2G40430.2"/>
<dbReference type="ProteomicsDB" id="238255">
    <molecule id="O22892-1"/>
</dbReference>
<dbReference type="EnsemblPlants" id="AT2G40430.1">
    <molecule id="O22892-1"/>
    <property type="protein sequence ID" value="AT2G40430.1"/>
    <property type="gene ID" value="AT2G40430"/>
</dbReference>
<dbReference type="GeneID" id="818636"/>
<dbReference type="Gramene" id="AT2G40430.1">
    <molecule id="O22892-1"/>
    <property type="protein sequence ID" value="AT2G40430.1"/>
    <property type="gene ID" value="AT2G40430"/>
</dbReference>
<dbReference type="KEGG" id="ath:AT2G40430"/>
<dbReference type="Araport" id="AT2G40430"/>
<dbReference type="TAIR" id="AT2G40430">
    <property type="gene designation" value="SMO4"/>
</dbReference>
<dbReference type="eggNOG" id="KOG2823">
    <property type="taxonomic scope" value="Eukaryota"/>
</dbReference>
<dbReference type="HOGENOM" id="CLU_048046_1_0_1"/>
<dbReference type="InParanoid" id="O22892"/>
<dbReference type="OMA" id="TEKWTHK"/>
<dbReference type="PhylomeDB" id="O22892"/>
<dbReference type="CD-CODE" id="4299E36E">
    <property type="entry name" value="Nucleolus"/>
</dbReference>
<dbReference type="PRO" id="PR:O22892"/>
<dbReference type="Proteomes" id="UP000006548">
    <property type="component" value="Chromosome 2"/>
</dbReference>
<dbReference type="ExpressionAtlas" id="O22892">
    <property type="expression patterns" value="baseline and differential"/>
</dbReference>
<dbReference type="GO" id="GO:0005730">
    <property type="term" value="C:nucleolus"/>
    <property type="evidence" value="ECO:0000250"/>
    <property type="project" value="UniProtKB"/>
</dbReference>
<dbReference type="GO" id="GO:0005654">
    <property type="term" value="C:nucleoplasm"/>
    <property type="evidence" value="ECO:0000250"/>
    <property type="project" value="UniProtKB"/>
</dbReference>
<dbReference type="GO" id="GO:0000027">
    <property type="term" value="P:ribosomal large subunit assembly"/>
    <property type="evidence" value="ECO:0000250"/>
    <property type="project" value="UniProtKB"/>
</dbReference>
<dbReference type="InterPro" id="IPR011687">
    <property type="entry name" value="Nop53/GLTSCR2"/>
</dbReference>
<dbReference type="PANTHER" id="PTHR14211">
    <property type="entry name" value="GLIOMA SUPPRESSOR CANDIDATE REGION GENE 2"/>
    <property type="match status" value="1"/>
</dbReference>
<dbReference type="PANTHER" id="PTHR14211:SF7">
    <property type="entry name" value="RIBOSOME BIOGENESIS PROTEIN NOP53"/>
    <property type="match status" value="1"/>
</dbReference>
<dbReference type="Pfam" id="PF07767">
    <property type="entry name" value="Nop53"/>
    <property type="match status" value="2"/>
</dbReference>
<dbReference type="PIRSF" id="PIRSF017302">
    <property type="entry name" value="Gltscr2"/>
    <property type="match status" value="1"/>
</dbReference>
<protein>
    <recommendedName>
        <fullName evidence="3">Ribosome biogenesis protein NOP53</fullName>
    </recommendedName>
</protein>
<comment type="function">
    <text evidence="1">May play a role in ribosome biogenesis.</text>
</comment>
<comment type="subcellular location">
    <subcellularLocation>
        <location evidence="1">Nucleus</location>
        <location evidence="1">Nucleolus</location>
    </subcellularLocation>
    <subcellularLocation>
        <location evidence="1">Nucleus</location>
        <location evidence="1">Nucleoplasm</location>
    </subcellularLocation>
</comment>
<comment type="alternative products">
    <event type="alternative splicing"/>
    <isoform>
        <id>O22892-1</id>
        <name>1</name>
        <sequence type="displayed"/>
    </isoform>
    <text>A number of isoforms are produced. According to EST sequences.</text>
</comment>
<comment type="similarity">
    <text evidence="3">Belongs to the NOP53 family.</text>
</comment>
<keyword id="KW-0025">Alternative splicing</keyword>
<keyword id="KW-0539">Nucleus</keyword>
<keyword id="KW-1185">Reference proteome</keyword>
<keyword id="KW-0690">Ribosome biogenesis</keyword>
<accession>O22892</accession>
<accession>Q93XZ8</accession>
<evidence type="ECO:0000250" key="1">
    <source>
        <dbReference type="UniProtKB" id="Q9NZM5"/>
    </source>
</evidence>
<evidence type="ECO:0000256" key="2">
    <source>
        <dbReference type="SAM" id="MobiDB-lite"/>
    </source>
</evidence>
<evidence type="ECO:0000305" key="3"/>
<proteinExistence type="evidence at protein level"/>
<sequence length="442" mass="50162">MGKRSKTSRKGKKAWRANISSEDIEDFFEKTTRDALSGGNLSAAPSEDLFHVDKSHDLPVKRKIEKHRERVLRVDSILKKNPFVQLVPSSKPKLKKSKKTIVIEDKAPKQVQKSVGDDSVMADLWGDDSKGEHESNPRKIFKNPSIISAVEIEHPGCSYNPTTESHQDMLAEAVAQEMQKVYKTELGPAPVPLTIEGDTLSEDERYFLDVDNFSEGEDNENVENEVSEAGIKLKENPFVQLKPSSNTNLKKIEDKTPRQAQKSVGDDSVMVDLLGDDIKEDLKYFLEVGNVGEGEDNKDVKIEVSEAGNNVSRKTKRVTRVELNKRCRQKALRKKETKEKAKEKILNEIDSLPNILEEIAKEDEDKQNKHLRRVIAKQEVLKIRPPRLGKYKFEAPPVQVLLTEEMTGSLRKLKACCTLARDRFKSLEKRGILVPSKQIRRF</sequence>
<reference key="1">
    <citation type="journal article" date="1999" name="Nature">
        <title>Sequence and analysis of chromosome 2 of the plant Arabidopsis thaliana.</title>
        <authorList>
            <person name="Lin X."/>
            <person name="Kaul S."/>
            <person name="Rounsley S.D."/>
            <person name="Shea T.P."/>
            <person name="Benito M.-I."/>
            <person name="Town C.D."/>
            <person name="Fujii C.Y."/>
            <person name="Mason T.M."/>
            <person name="Bowman C.L."/>
            <person name="Barnstead M.E."/>
            <person name="Feldblyum T.V."/>
            <person name="Buell C.R."/>
            <person name="Ketchum K.A."/>
            <person name="Lee J.J."/>
            <person name="Ronning C.M."/>
            <person name="Koo H.L."/>
            <person name="Moffat K.S."/>
            <person name="Cronin L.A."/>
            <person name="Shen M."/>
            <person name="Pai G."/>
            <person name="Van Aken S."/>
            <person name="Umayam L."/>
            <person name="Tallon L.J."/>
            <person name="Gill J.E."/>
            <person name="Adams M.D."/>
            <person name="Carrera A.J."/>
            <person name="Creasy T.H."/>
            <person name="Goodman H.M."/>
            <person name="Somerville C.R."/>
            <person name="Copenhaver G.P."/>
            <person name="Preuss D."/>
            <person name="Nierman W.C."/>
            <person name="White O."/>
            <person name="Eisen J.A."/>
            <person name="Salzberg S.L."/>
            <person name="Fraser C.M."/>
            <person name="Venter J.C."/>
        </authorList>
    </citation>
    <scope>NUCLEOTIDE SEQUENCE [LARGE SCALE GENOMIC DNA]</scope>
    <source>
        <strain>cv. Columbia</strain>
    </source>
</reference>
<reference key="2">
    <citation type="journal article" date="2017" name="Plant J.">
        <title>Araport11: a complete reannotation of the Arabidopsis thaliana reference genome.</title>
        <authorList>
            <person name="Cheng C.Y."/>
            <person name="Krishnakumar V."/>
            <person name="Chan A.P."/>
            <person name="Thibaud-Nissen F."/>
            <person name="Schobel S."/>
            <person name="Town C.D."/>
        </authorList>
    </citation>
    <scope>GENOME REANNOTATION</scope>
    <source>
        <strain>cv. Columbia</strain>
    </source>
</reference>
<reference key="3">
    <citation type="journal article" date="2003" name="Science">
        <title>Empirical analysis of transcriptional activity in the Arabidopsis genome.</title>
        <authorList>
            <person name="Yamada K."/>
            <person name="Lim J."/>
            <person name="Dale J.M."/>
            <person name="Chen H."/>
            <person name="Shinn P."/>
            <person name="Palm C.J."/>
            <person name="Southwick A.M."/>
            <person name="Wu H.C."/>
            <person name="Kim C.J."/>
            <person name="Nguyen M."/>
            <person name="Pham P.K."/>
            <person name="Cheuk R.F."/>
            <person name="Karlin-Newmann G."/>
            <person name="Liu S.X."/>
            <person name="Lam B."/>
            <person name="Sakano H."/>
            <person name="Wu T."/>
            <person name="Yu G."/>
            <person name="Miranda M."/>
            <person name="Quach H.L."/>
            <person name="Tripp M."/>
            <person name="Chang C.H."/>
            <person name="Lee J.M."/>
            <person name="Toriumi M.J."/>
            <person name="Chan M.M."/>
            <person name="Tang C.C."/>
            <person name="Onodera C.S."/>
            <person name="Deng J.M."/>
            <person name="Akiyama K."/>
            <person name="Ansari Y."/>
            <person name="Arakawa T."/>
            <person name="Banh J."/>
            <person name="Banno F."/>
            <person name="Bowser L."/>
            <person name="Brooks S.Y."/>
            <person name="Carninci P."/>
            <person name="Chao Q."/>
            <person name="Choy N."/>
            <person name="Enju A."/>
            <person name="Goldsmith A.D."/>
            <person name="Gurjal M."/>
            <person name="Hansen N.F."/>
            <person name="Hayashizaki Y."/>
            <person name="Johnson-Hopson C."/>
            <person name="Hsuan V.W."/>
            <person name="Iida K."/>
            <person name="Karnes M."/>
            <person name="Khan S."/>
            <person name="Koesema E."/>
            <person name="Ishida J."/>
            <person name="Jiang P.X."/>
            <person name="Jones T."/>
            <person name="Kawai J."/>
            <person name="Kamiya A."/>
            <person name="Meyers C."/>
            <person name="Nakajima M."/>
            <person name="Narusaka M."/>
            <person name="Seki M."/>
            <person name="Sakurai T."/>
            <person name="Satou M."/>
            <person name="Tamse R."/>
            <person name="Vaysberg M."/>
            <person name="Wallender E.K."/>
            <person name="Wong C."/>
            <person name="Yamamura Y."/>
            <person name="Yuan S."/>
            <person name="Shinozaki K."/>
            <person name="Davis R.W."/>
            <person name="Theologis A."/>
            <person name="Ecker J.R."/>
        </authorList>
    </citation>
    <scope>NUCLEOTIDE SEQUENCE [LARGE SCALE MRNA]</scope>
    <source>
        <strain>cv. Columbia</strain>
    </source>
</reference>
<reference key="4">
    <citation type="journal article" date="2009" name="Plant Physiol.">
        <title>Large-scale Arabidopsis phosphoproteome profiling reveals novel chloroplast kinase substrates and phosphorylation networks.</title>
        <authorList>
            <person name="Reiland S."/>
            <person name="Messerli G."/>
            <person name="Baerenfaller K."/>
            <person name="Gerrits B."/>
            <person name="Endler A."/>
            <person name="Grossmann J."/>
            <person name="Gruissem W."/>
            <person name="Baginsky S."/>
        </authorList>
    </citation>
    <scope>IDENTIFICATION BY MASS SPECTROMETRY [LARGE SCALE ANALYSIS]</scope>
</reference>
<organism>
    <name type="scientific">Arabidopsis thaliana</name>
    <name type="common">Mouse-ear cress</name>
    <dbReference type="NCBI Taxonomy" id="3702"/>
    <lineage>
        <taxon>Eukaryota</taxon>
        <taxon>Viridiplantae</taxon>
        <taxon>Streptophyta</taxon>
        <taxon>Embryophyta</taxon>
        <taxon>Tracheophyta</taxon>
        <taxon>Spermatophyta</taxon>
        <taxon>Magnoliopsida</taxon>
        <taxon>eudicotyledons</taxon>
        <taxon>Gunneridae</taxon>
        <taxon>Pentapetalae</taxon>
        <taxon>rosids</taxon>
        <taxon>malvids</taxon>
        <taxon>Brassicales</taxon>
        <taxon>Brassicaceae</taxon>
        <taxon>Camelineae</taxon>
        <taxon>Arabidopsis</taxon>
    </lineage>
</organism>
<name>NOP53_ARATH</name>
<gene>
    <name type="ordered locus">At2g40430</name>
    <name type="ORF">T2P4.22</name>
</gene>